<reference key="1">
    <citation type="journal article" date="2007" name="Nat. Biotechnol.">
        <title>Complete genome sequence of the myxobacterium Sorangium cellulosum.</title>
        <authorList>
            <person name="Schneiker S."/>
            <person name="Perlova O."/>
            <person name="Kaiser O."/>
            <person name="Gerth K."/>
            <person name="Alici A."/>
            <person name="Altmeyer M.O."/>
            <person name="Bartels D."/>
            <person name="Bekel T."/>
            <person name="Beyer S."/>
            <person name="Bode E."/>
            <person name="Bode H.B."/>
            <person name="Bolten C.J."/>
            <person name="Choudhuri J.V."/>
            <person name="Doss S."/>
            <person name="Elnakady Y.A."/>
            <person name="Frank B."/>
            <person name="Gaigalat L."/>
            <person name="Goesmann A."/>
            <person name="Groeger C."/>
            <person name="Gross F."/>
            <person name="Jelsbak L."/>
            <person name="Jelsbak L."/>
            <person name="Kalinowski J."/>
            <person name="Kegler C."/>
            <person name="Knauber T."/>
            <person name="Konietzny S."/>
            <person name="Kopp M."/>
            <person name="Krause L."/>
            <person name="Krug D."/>
            <person name="Linke B."/>
            <person name="Mahmud T."/>
            <person name="Martinez-Arias R."/>
            <person name="McHardy A.C."/>
            <person name="Merai M."/>
            <person name="Meyer F."/>
            <person name="Mormann S."/>
            <person name="Munoz-Dorado J."/>
            <person name="Perez J."/>
            <person name="Pradella S."/>
            <person name="Rachid S."/>
            <person name="Raddatz G."/>
            <person name="Rosenau F."/>
            <person name="Rueckert C."/>
            <person name="Sasse F."/>
            <person name="Scharfe M."/>
            <person name="Schuster S.C."/>
            <person name="Suen G."/>
            <person name="Treuner-Lange A."/>
            <person name="Velicer G.J."/>
            <person name="Vorholter F.-J."/>
            <person name="Weissman K.J."/>
            <person name="Welch R.D."/>
            <person name="Wenzel S.C."/>
            <person name="Whitworth D.E."/>
            <person name="Wilhelm S."/>
            <person name="Wittmann C."/>
            <person name="Bloecker H."/>
            <person name="Puehler A."/>
            <person name="Mueller R."/>
        </authorList>
    </citation>
    <scope>NUCLEOTIDE SEQUENCE [LARGE SCALE GENOMIC DNA]</scope>
    <source>
        <strain>So ce56</strain>
    </source>
</reference>
<comment type="similarity">
    <text evidence="1">Belongs to the universal ribosomal protein uS2 family.</text>
</comment>
<keyword id="KW-1185">Reference proteome</keyword>
<keyword id="KW-0687">Ribonucleoprotein</keyword>
<keyword id="KW-0689">Ribosomal protein</keyword>
<gene>
    <name evidence="1" type="primary">rpsB</name>
    <name type="ordered locus">sce3132</name>
</gene>
<dbReference type="EMBL" id="AM746676">
    <property type="protein sequence ID" value="CAN93290.1"/>
    <property type="molecule type" value="Genomic_DNA"/>
</dbReference>
<dbReference type="SMR" id="A9GIN6"/>
<dbReference type="STRING" id="448385.sce3132"/>
<dbReference type="KEGG" id="scl:sce3132"/>
<dbReference type="eggNOG" id="COG0052">
    <property type="taxonomic scope" value="Bacteria"/>
</dbReference>
<dbReference type="HOGENOM" id="CLU_040318_1_2_7"/>
<dbReference type="OrthoDB" id="9808036at2"/>
<dbReference type="BioCyc" id="SCEL448385:SCE_RS16050-MONOMER"/>
<dbReference type="Proteomes" id="UP000002139">
    <property type="component" value="Chromosome"/>
</dbReference>
<dbReference type="GO" id="GO:0022627">
    <property type="term" value="C:cytosolic small ribosomal subunit"/>
    <property type="evidence" value="ECO:0007669"/>
    <property type="project" value="TreeGrafter"/>
</dbReference>
<dbReference type="GO" id="GO:0003735">
    <property type="term" value="F:structural constituent of ribosome"/>
    <property type="evidence" value="ECO:0007669"/>
    <property type="project" value="InterPro"/>
</dbReference>
<dbReference type="GO" id="GO:0006412">
    <property type="term" value="P:translation"/>
    <property type="evidence" value="ECO:0007669"/>
    <property type="project" value="UniProtKB-UniRule"/>
</dbReference>
<dbReference type="CDD" id="cd01425">
    <property type="entry name" value="RPS2"/>
    <property type="match status" value="1"/>
</dbReference>
<dbReference type="FunFam" id="1.10.287.610:FF:000001">
    <property type="entry name" value="30S ribosomal protein S2"/>
    <property type="match status" value="1"/>
</dbReference>
<dbReference type="Gene3D" id="3.40.50.10490">
    <property type="entry name" value="Glucose-6-phosphate isomerase like protein, domain 1"/>
    <property type="match status" value="1"/>
</dbReference>
<dbReference type="Gene3D" id="1.10.287.610">
    <property type="entry name" value="Helix hairpin bin"/>
    <property type="match status" value="1"/>
</dbReference>
<dbReference type="HAMAP" id="MF_00291_B">
    <property type="entry name" value="Ribosomal_uS2_B"/>
    <property type="match status" value="1"/>
</dbReference>
<dbReference type="InterPro" id="IPR001865">
    <property type="entry name" value="Ribosomal_uS2"/>
</dbReference>
<dbReference type="InterPro" id="IPR005706">
    <property type="entry name" value="Ribosomal_uS2_bac/mit/plastid"/>
</dbReference>
<dbReference type="InterPro" id="IPR018130">
    <property type="entry name" value="Ribosomal_uS2_CS"/>
</dbReference>
<dbReference type="InterPro" id="IPR023591">
    <property type="entry name" value="Ribosomal_uS2_flav_dom_sf"/>
</dbReference>
<dbReference type="NCBIfam" id="TIGR01011">
    <property type="entry name" value="rpsB_bact"/>
    <property type="match status" value="1"/>
</dbReference>
<dbReference type="PANTHER" id="PTHR12534">
    <property type="entry name" value="30S RIBOSOMAL PROTEIN S2 PROKARYOTIC AND ORGANELLAR"/>
    <property type="match status" value="1"/>
</dbReference>
<dbReference type="PANTHER" id="PTHR12534:SF0">
    <property type="entry name" value="SMALL RIBOSOMAL SUBUNIT PROTEIN US2M"/>
    <property type="match status" value="1"/>
</dbReference>
<dbReference type="Pfam" id="PF00318">
    <property type="entry name" value="Ribosomal_S2"/>
    <property type="match status" value="1"/>
</dbReference>
<dbReference type="PRINTS" id="PR00395">
    <property type="entry name" value="RIBOSOMALS2"/>
</dbReference>
<dbReference type="SUPFAM" id="SSF52313">
    <property type="entry name" value="Ribosomal protein S2"/>
    <property type="match status" value="1"/>
</dbReference>
<dbReference type="PROSITE" id="PS00962">
    <property type="entry name" value="RIBOSOMAL_S2_1"/>
    <property type="match status" value="1"/>
</dbReference>
<dbReference type="PROSITE" id="PS00963">
    <property type="entry name" value="RIBOSOMAL_S2_2"/>
    <property type="match status" value="1"/>
</dbReference>
<proteinExistence type="inferred from homology"/>
<feature type="chain" id="PRO_0000352038" description="Small ribosomal subunit protein uS2">
    <location>
        <begin position="1"/>
        <end position="278"/>
    </location>
</feature>
<feature type="region of interest" description="Disordered" evidence="2">
    <location>
        <begin position="235"/>
        <end position="278"/>
    </location>
</feature>
<feature type="compositionally biased region" description="Gly residues" evidence="2">
    <location>
        <begin position="243"/>
        <end position="252"/>
    </location>
</feature>
<feature type="compositionally biased region" description="Gly residues" evidence="2">
    <location>
        <begin position="263"/>
        <end position="272"/>
    </location>
</feature>
<protein>
    <recommendedName>
        <fullName evidence="1">Small ribosomal subunit protein uS2</fullName>
    </recommendedName>
    <alternativeName>
        <fullName evidence="3">30S ribosomal protein S2</fullName>
    </alternativeName>
</protein>
<organism>
    <name type="scientific">Sorangium cellulosum (strain So ce56)</name>
    <name type="common">Polyangium cellulosum (strain So ce56)</name>
    <dbReference type="NCBI Taxonomy" id="448385"/>
    <lineage>
        <taxon>Bacteria</taxon>
        <taxon>Pseudomonadati</taxon>
        <taxon>Myxococcota</taxon>
        <taxon>Polyangia</taxon>
        <taxon>Polyangiales</taxon>
        <taxon>Polyangiaceae</taxon>
        <taxon>Sorangium</taxon>
    </lineage>
</organism>
<name>RS2_SORC5</name>
<evidence type="ECO:0000255" key="1">
    <source>
        <dbReference type="HAMAP-Rule" id="MF_00291"/>
    </source>
</evidence>
<evidence type="ECO:0000256" key="2">
    <source>
        <dbReference type="SAM" id="MobiDB-lite"/>
    </source>
</evidence>
<evidence type="ECO:0000305" key="3"/>
<sequence length="278" mass="30839">MQAVAPQPGDFPLPLRSLLDAGVHFGHQTKRWNPKMRPFIYGARNGIHIIDLDQTTRLFKRAYDFLTDAVGRGGHVLFVGTKRQAQDIVQEEARRAGMYFVTNRWLGGTLTNFRTIKQGLDRLRTLERMKEDGTYEQLLKKEVVRLEKERERLEKYLGGLKGMGGLPAAIFVIDPHQESIAISEARKLNVPVVAITDTNCDPDLVDFVIPGNDDAIRSIRLITARVADACVEGAQRRKDHGEGGQQAAGGGRGQRDEINVYQGGRGGRGGGPRQQQAS</sequence>
<accession>A9GIN6</accession>